<name>PIP24_MAIZE</name>
<proteinExistence type="evidence at protein level"/>
<accession>Q9ATM6</accession>
<organism>
    <name type="scientific">Zea mays</name>
    <name type="common">Maize</name>
    <dbReference type="NCBI Taxonomy" id="4577"/>
    <lineage>
        <taxon>Eukaryota</taxon>
        <taxon>Viridiplantae</taxon>
        <taxon>Streptophyta</taxon>
        <taxon>Embryophyta</taxon>
        <taxon>Tracheophyta</taxon>
        <taxon>Spermatophyta</taxon>
        <taxon>Magnoliopsida</taxon>
        <taxon>Liliopsida</taxon>
        <taxon>Poales</taxon>
        <taxon>Poaceae</taxon>
        <taxon>PACMAD clade</taxon>
        <taxon>Panicoideae</taxon>
        <taxon>Andropogonodae</taxon>
        <taxon>Andropogoneae</taxon>
        <taxon>Tripsacinae</taxon>
        <taxon>Zea</taxon>
    </lineage>
</organism>
<dbReference type="EMBL" id="AF326494">
    <property type="protein sequence ID" value="AAK26761.1"/>
    <property type="molecule type" value="mRNA"/>
</dbReference>
<dbReference type="RefSeq" id="NP_001105026.1">
    <property type="nucleotide sequence ID" value="NM_001111556.1"/>
</dbReference>
<dbReference type="SMR" id="Q9ATM6"/>
<dbReference type="FunCoup" id="Q9ATM6">
    <property type="interactions" value="312"/>
</dbReference>
<dbReference type="STRING" id="4577.Q9ATM6"/>
<dbReference type="PaxDb" id="4577-GRMZM2G154628_P01"/>
<dbReference type="ProMEX" id="Q9ATM6"/>
<dbReference type="EnsemblPlants" id="Zm00001eb247760_T001">
    <property type="protein sequence ID" value="Zm00001eb247760_P001"/>
    <property type="gene ID" value="Zm00001eb247760"/>
</dbReference>
<dbReference type="GeneID" id="541890"/>
<dbReference type="Gramene" id="Zm00001eb247760_T001">
    <property type="protein sequence ID" value="Zm00001eb247760_P001"/>
    <property type="gene ID" value="Zm00001eb247760"/>
</dbReference>
<dbReference type="KEGG" id="zma:541890"/>
<dbReference type="eggNOG" id="KOG0223">
    <property type="taxonomic scope" value="Eukaryota"/>
</dbReference>
<dbReference type="HOGENOM" id="CLU_020019_3_0_1"/>
<dbReference type="InParanoid" id="Q9ATM6"/>
<dbReference type="OMA" id="RPPYMSS"/>
<dbReference type="OrthoDB" id="3222at2759"/>
<dbReference type="Proteomes" id="UP000007305">
    <property type="component" value="Chromosome 5"/>
</dbReference>
<dbReference type="ExpressionAtlas" id="Q9ATM6">
    <property type="expression patterns" value="baseline and differential"/>
</dbReference>
<dbReference type="GO" id="GO:0016020">
    <property type="term" value="C:membrane"/>
    <property type="evidence" value="ECO:0000304"/>
    <property type="project" value="AgBase"/>
</dbReference>
<dbReference type="GO" id="GO:0005886">
    <property type="term" value="C:plasma membrane"/>
    <property type="evidence" value="ECO:0000318"/>
    <property type="project" value="GO_Central"/>
</dbReference>
<dbReference type="GO" id="GO:0015250">
    <property type="term" value="F:water channel activity"/>
    <property type="evidence" value="ECO:0000318"/>
    <property type="project" value="GO_Central"/>
</dbReference>
<dbReference type="CDD" id="cd00333">
    <property type="entry name" value="MIP"/>
    <property type="match status" value="1"/>
</dbReference>
<dbReference type="FunFam" id="1.20.1080.10:FF:000001">
    <property type="entry name" value="Probable aquaporin PIP1-2"/>
    <property type="match status" value="1"/>
</dbReference>
<dbReference type="Gene3D" id="1.20.1080.10">
    <property type="entry name" value="Glycerol uptake facilitator protein"/>
    <property type="match status" value="1"/>
</dbReference>
<dbReference type="InterPro" id="IPR023271">
    <property type="entry name" value="Aquaporin-like"/>
</dbReference>
<dbReference type="InterPro" id="IPR034294">
    <property type="entry name" value="Aquaporin_transptr"/>
</dbReference>
<dbReference type="InterPro" id="IPR000425">
    <property type="entry name" value="MIP"/>
</dbReference>
<dbReference type="InterPro" id="IPR022357">
    <property type="entry name" value="MIP_CS"/>
</dbReference>
<dbReference type="NCBIfam" id="TIGR00861">
    <property type="entry name" value="MIP"/>
    <property type="match status" value="1"/>
</dbReference>
<dbReference type="PANTHER" id="PTHR45687">
    <property type="entry name" value="AQUAPORIN OR AQUAGLYCEROPORIN RELATED"/>
    <property type="match status" value="1"/>
</dbReference>
<dbReference type="Pfam" id="PF00230">
    <property type="entry name" value="MIP"/>
    <property type="match status" value="1"/>
</dbReference>
<dbReference type="PRINTS" id="PR00783">
    <property type="entry name" value="MINTRINSICP"/>
</dbReference>
<dbReference type="SUPFAM" id="SSF81338">
    <property type="entry name" value="Aquaporin-like"/>
    <property type="match status" value="1"/>
</dbReference>
<dbReference type="PROSITE" id="PS00221">
    <property type="entry name" value="MIP"/>
    <property type="match status" value="1"/>
</dbReference>
<gene>
    <name type="primary">PIP2-4</name>
</gene>
<protein>
    <recommendedName>
        <fullName>Aquaporin PIP2-4</fullName>
    </recommendedName>
    <alternativeName>
        <fullName>Plasma membrane intrinsic protein 2-4</fullName>
    </alternativeName>
    <alternativeName>
        <fullName>ZmPIP2-4</fullName>
    </alternativeName>
    <alternativeName>
        <fullName>ZmPIP2;4</fullName>
    </alternativeName>
</protein>
<keyword id="KW-1003">Cell membrane</keyword>
<keyword id="KW-0472">Membrane</keyword>
<keyword id="KW-1185">Reference proteome</keyword>
<keyword id="KW-0677">Repeat</keyword>
<keyword id="KW-0812">Transmembrane</keyword>
<keyword id="KW-1133">Transmembrane helix</keyword>
<keyword id="KW-0813">Transport</keyword>
<reference key="1">
    <citation type="journal article" date="2001" name="Plant Physiol.">
        <title>Aquaporins constitute a large and highly divergent protein family in maize.</title>
        <authorList>
            <person name="Chaumont F."/>
            <person name="Barrieu F."/>
            <person name="Wojcik E."/>
            <person name="Chrispeels M.J."/>
            <person name="Jung R."/>
        </authorList>
    </citation>
    <scope>NUCLEOTIDE SEQUENCE [MRNA]</scope>
    <scope>GENE FAMILY</scope>
    <scope>NOMENCLATURE</scope>
    <source>
        <strain>cv. B73</strain>
    </source>
</reference>
<reference key="2">
    <citation type="journal article" date="2002" name="Planta">
        <title>Sensitivity of cell hydraulic conductivity to mercury is coincident with symplasmic isolation and expression of plasmalemma aquaporin genes in growing maize roots.</title>
        <authorList>
            <person name="Hukin D."/>
            <person name="Doering-Saad C."/>
            <person name="Thomas C.R."/>
            <person name="Pritchard J."/>
        </authorList>
    </citation>
    <scope>TISSUE SPECIFICITY</scope>
</reference>
<reference key="3">
    <citation type="journal article" date="2004" name="Plant Cell">
        <title>Interactions between plasma membrane aquaporins modulate their water channel activity.</title>
        <authorList>
            <person name="Fetter K."/>
            <person name="van Wilder V."/>
            <person name="Moshelion M."/>
            <person name="Chaumont F."/>
        </authorList>
    </citation>
    <scope>FUNCTION</scope>
    <scope>SUBUNIT</scope>
</reference>
<sequence length="288" mass="30322">MAKDIEASGPEAGEFSAKDYTDPPPAPLIDAEELTQWSLYRAVIAEFIATLLFLYITVATVIGYKHQTDASASGPDAACGGVGILGIAWAFGGMIFILVYCTAGISGGHINPAVTFGLFLARKVSLVRALLYIIAQCLGAICGVGLVKGFQSAYYVRYGGGANELSDGYSKGTGLAAEIIGTFVLVYTVFSATDPKRSARDSHVPVLAPLPIGFAVFMVHLATIPITGTGINPARSLGAAVIYNKDKAWDDQWIFWVGPLIGAAIAAAYHQYVLRASATKLGSYRSNA</sequence>
<feature type="chain" id="PRO_0000286021" description="Aquaporin PIP2-4">
    <location>
        <begin position="1"/>
        <end position="288"/>
    </location>
</feature>
<feature type="transmembrane region" description="Helical; Name=1" evidence="2">
    <location>
        <begin position="42"/>
        <end position="62"/>
    </location>
</feature>
<feature type="transmembrane region" description="Helical; Name=2" evidence="2">
    <location>
        <begin position="79"/>
        <end position="99"/>
    </location>
</feature>
<feature type="transmembrane region" description="Helical; Name=3" evidence="2">
    <location>
        <begin position="130"/>
        <end position="150"/>
    </location>
</feature>
<feature type="transmembrane region" description="Helical; Name=4" evidence="2">
    <location>
        <begin position="172"/>
        <end position="192"/>
    </location>
</feature>
<feature type="transmembrane region" description="Helical; Name=5" evidence="2">
    <location>
        <begin position="206"/>
        <end position="226"/>
    </location>
</feature>
<feature type="transmembrane region" description="Helical; Name=6" evidence="2">
    <location>
        <begin position="254"/>
        <end position="274"/>
    </location>
</feature>
<feature type="region of interest" description="Disordered" evidence="3">
    <location>
        <begin position="1"/>
        <end position="24"/>
    </location>
</feature>
<feature type="short sequence motif" description="NPA 1" evidence="1">
    <location>
        <begin position="111"/>
        <end position="113"/>
    </location>
</feature>
<feature type="short sequence motif" description="NPA 2" evidence="1">
    <location>
        <begin position="232"/>
        <end position="234"/>
    </location>
</feature>
<comment type="function">
    <text evidence="5">Water channel required to facilitate the transport of water across cell membrane. Active as homomers. Increased activity when heteromerization with PIP1-2.</text>
</comment>
<comment type="subunit">
    <text evidence="5">Homomers. May interact with PIP1-2 to form heteromers.</text>
</comment>
<comment type="subcellular location">
    <subcellularLocation>
        <location evidence="1">Cell membrane</location>
        <topology evidence="1">Multi-pass membrane protein</topology>
    </subcellularLocation>
</comment>
<comment type="tissue specificity">
    <text evidence="4">Expressed in the root growing zone at 5-6 mm from the root tip.</text>
</comment>
<comment type="domain">
    <text>Aquaporins contain two tandem repeats each containing three membrane-spanning domains and a pore-forming loop with the signature motif Asn-Pro-Ala (NPA).</text>
</comment>
<comment type="similarity">
    <text evidence="6">Belongs to the MIP/aquaporin (TC 1.A.8) family. PIP (TC 1.A.8.11) subfamily.</text>
</comment>
<evidence type="ECO:0000250" key="1"/>
<evidence type="ECO:0000255" key="2"/>
<evidence type="ECO:0000256" key="3">
    <source>
        <dbReference type="SAM" id="MobiDB-lite"/>
    </source>
</evidence>
<evidence type="ECO:0000269" key="4">
    <source>
    </source>
</evidence>
<evidence type="ECO:0000269" key="5">
    <source>
    </source>
</evidence>
<evidence type="ECO:0000305" key="6"/>